<comment type="function">
    <text evidence="1">Component of the cytochrome c oxidase, the last enzyme in the mitochondrial electron transport chain which drives oxidative phosphorylation. The respiratory chain contains 3 multisubunit complexes succinate dehydrogenase (complex II, CII), ubiquinol-cytochrome c oxidoreductase (cytochrome b-c1 complex, complex III, CIII) and cytochrome c oxidase (complex IV, CIV), that cooperate to transfer electrons derived from NADH and succinate to molecular oxygen, creating an electrochemical gradient over the inner membrane that drives transmembrane transport and the ATP synthase. Cytochrome c oxidase is the component of the respiratory chain that catalyzes the reduction of oxygen to water. Electrons originating from reduced cytochrome c in the intermembrane space (IMS) are transferred via the dinuclear copper A center (CU(A)) of subunit 2 and heme A of subunit 1 to the active site in subunit 1, a binuclear center (BNC) formed by heme A3 and copper B (CU(B)). The BNC reduces molecular oxygen to 2 water molecules unsing 4 electrons from cytochrome c in the IMS and 4 protons from the mitochondrial matrix. NDUFA4 is required for complex IV maintenance.</text>
</comment>
<comment type="subunit">
    <text evidence="1 2">Component of the cytochrome c oxidase (complex IV, CIV), a multisubunit enzyme composed of 14 subunits. The complex is composed of a catalytic core of 3 subunits MT-CO1, MT-CO2 and MT-CO3, encoded in the mitochondrial DNA, and 11 supernumerary subunits COX4I, COX5A, COX5B, COX6A, COX6B, COX6C, COX7A, COX7B, COX7C, COX8 and NDUFA4, which are encoded in the nuclear genome. The complex exists as a monomer or a dimer and forms supercomplexes (SCs) in the inner mitochondrial membrane with NADH-ubiquinone oxidoreductase (complex I, CI) and ubiquinol-cytochrome c oxidoreductase (cytochrome b-c1 complex, complex III, CIII), resulting in different assemblies (supercomplex SCI(1)III(2)IV(1) and megacomplex MCI(2)III(2)IV(2)) (By similarity). Interacts with RAB5IF (By similarity). Interacts with FLVCR2; this interaction occurs in the absence of heme and is disrupted upon heme binding.</text>
</comment>
<comment type="subcellular location">
    <subcellularLocation>
        <location evidence="1">Mitochondrion inner membrane</location>
        <topology evidence="1">Single-pass membrane protein</topology>
    </subcellularLocation>
</comment>
<comment type="similarity">
    <text evidence="3">Belongs to the complex IV NDUFA4 subunit family.</text>
</comment>
<protein>
    <recommendedName>
        <fullName>Cytochrome c oxidase subunit NDUFA4</fullName>
    </recommendedName>
</protein>
<evidence type="ECO:0000250" key="1">
    <source>
        <dbReference type="UniProtKB" id="O00483"/>
    </source>
</evidence>
<evidence type="ECO:0000250" key="2">
    <source>
        <dbReference type="UniProtKB" id="Q62425"/>
    </source>
</evidence>
<evidence type="ECO:0000305" key="3"/>
<organism>
    <name type="scientific">Gorilla gorilla gorilla</name>
    <name type="common">Western lowland gorilla</name>
    <dbReference type="NCBI Taxonomy" id="9595"/>
    <lineage>
        <taxon>Eukaryota</taxon>
        <taxon>Metazoa</taxon>
        <taxon>Chordata</taxon>
        <taxon>Craniata</taxon>
        <taxon>Vertebrata</taxon>
        <taxon>Euteleostomi</taxon>
        <taxon>Mammalia</taxon>
        <taxon>Eutheria</taxon>
        <taxon>Euarchontoglires</taxon>
        <taxon>Primates</taxon>
        <taxon>Haplorrhini</taxon>
        <taxon>Catarrhini</taxon>
        <taxon>Hominidae</taxon>
        <taxon>Gorilla</taxon>
    </lineage>
</organism>
<dbReference type="EMBL" id="DQ885736">
    <property type="protein sequence ID" value="ABH12245.1"/>
    <property type="molecule type" value="mRNA"/>
</dbReference>
<dbReference type="RefSeq" id="XP_004045156.1">
    <property type="nucleotide sequence ID" value="XM_004045108.5"/>
</dbReference>
<dbReference type="SMR" id="Q0MQ98"/>
<dbReference type="FunCoup" id="Q0MQ98">
    <property type="interactions" value="841"/>
</dbReference>
<dbReference type="STRING" id="9593.ENSGGOP00000001421"/>
<dbReference type="Ensembl" id="ENSGGOT00000001447.3">
    <property type="protein sequence ID" value="ENSGGOP00000001421.2"/>
    <property type="gene ID" value="ENSGGOG00000001437.3"/>
</dbReference>
<dbReference type="GeneID" id="101124353"/>
<dbReference type="KEGG" id="ggo:101124353"/>
<dbReference type="CTD" id="4697"/>
<dbReference type="eggNOG" id="ENOG502S65P">
    <property type="taxonomic scope" value="Eukaryota"/>
</dbReference>
<dbReference type="GeneTree" id="ENSGT00940000154268"/>
<dbReference type="HOGENOM" id="CLU_181002_0_0_1"/>
<dbReference type="InParanoid" id="Q0MQ98"/>
<dbReference type="OMA" id="GPNQYKF"/>
<dbReference type="OrthoDB" id="591at9604"/>
<dbReference type="Proteomes" id="UP000001519">
    <property type="component" value="Chromosome 7"/>
</dbReference>
<dbReference type="Bgee" id="ENSGGOG00000001437">
    <property type="expression patterns" value="Expressed in heart and 6 other cell types or tissues"/>
</dbReference>
<dbReference type="GO" id="GO:0005743">
    <property type="term" value="C:mitochondrial inner membrane"/>
    <property type="evidence" value="ECO:0007669"/>
    <property type="project" value="UniProtKB-SubCell"/>
</dbReference>
<dbReference type="GO" id="GO:0045277">
    <property type="term" value="C:respiratory chain complex IV"/>
    <property type="evidence" value="ECO:0000250"/>
    <property type="project" value="UniProtKB"/>
</dbReference>
<dbReference type="GO" id="GO:0044877">
    <property type="term" value="F:protein-containing complex binding"/>
    <property type="evidence" value="ECO:0007669"/>
    <property type="project" value="Ensembl"/>
</dbReference>
<dbReference type="InterPro" id="IPR010530">
    <property type="entry name" value="B12D"/>
</dbReference>
<dbReference type="PANTHER" id="PTHR14256:SF4">
    <property type="entry name" value="CYTOCHROME C OXIDASE SUBUNIT NDUFA4"/>
    <property type="match status" value="1"/>
</dbReference>
<dbReference type="PANTHER" id="PTHR14256">
    <property type="entry name" value="NADH-UBIQUINONE OXIDOREDUCTASE MLRQ SUBUNIT"/>
    <property type="match status" value="1"/>
</dbReference>
<dbReference type="Pfam" id="PF06522">
    <property type="entry name" value="B12D"/>
    <property type="match status" value="1"/>
</dbReference>
<gene>
    <name type="primary">NDUFA4</name>
</gene>
<name>NDUA4_GORGO</name>
<sequence length="81" mass="9329">MLRQIIGQAKKHPSLIPLFVFIGTGATGATLYLLRLALFNPDVCWDKSKPEPWNKLGPNDQYKFYSVNVDYSKLKKERPDF</sequence>
<proteinExistence type="inferred from homology"/>
<reference key="1">
    <citation type="journal article" date="2006" name="Gene">
        <title>Adaptive selection of mitochondrial complex I subunits during primate radiation.</title>
        <authorList>
            <person name="Mishmar D."/>
            <person name="Ruiz-Pesini E."/>
            <person name="Mondragon-Palomino M."/>
            <person name="Procaccio V."/>
            <person name="Gaut B."/>
            <person name="Wallace D.C."/>
        </authorList>
    </citation>
    <scope>NUCLEOTIDE SEQUENCE [MRNA]</scope>
</reference>
<keyword id="KW-0007">Acetylation</keyword>
<keyword id="KW-0249">Electron transport</keyword>
<keyword id="KW-0472">Membrane</keyword>
<keyword id="KW-0496">Mitochondrion</keyword>
<keyword id="KW-0999">Mitochondrion inner membrane</keyword>
<keyword id="KW-0597">Phosphoprotein</keyword>
<keyword id="KW-1185">Reference proteome</keyword>
<keyword id="KW-0679">Respiratory chain</keyword>
<keyword id="KW-0812">Transmembrane</keyword>
<keyword id="KW-1133">Transmembrane helix</keyword>
<keyword id="KW-0813">Transport</keyword>
<accession>Q0MQ98</accession>
<feature type="chain" id="PRO_0000251164" description="Cytochrome c oxidase subunit NDUFA4">
    <location>
        <begin position="1"/>
        <end position="81"/>
    </location>
</feature>
<feature type="topological domain" description="Mitochondrial matrix" evidence="1">
    <location>
        <begin position="1"/>
        <end position="14"/>
    </location>
</feature>
<feature type="transmembrane region" description="Helical" evidence="1">
    <location>
        <begin position="15"/>
        <end position="37"/>
    </location>
</feature>
<feature type="topological domain" description="Mitochondrial intermembrane" evidence="1">
    <location>
        <begin position="38"/>
        <end position="81"/>
    </location>
</feature>
<feature type="modified residue" description="N6-acetyllysine" evidence="2">
    <location>
        <position position="10"/>
    </location>
</feature>
<feature type="modified residue" description="Phosphoserine" evidence="1">
    <location>
        <position position="66"/>
    </location>
</feature>